<accession>A0QCX8</accession>
<evidence type="ECO:0000255" key="1">
    <source>
        <dbReference type="HAMAP-Rule" id="MF_01347"/>
    </source>
</evidence>
<evidence type="ECO:0000256" key="2">
    <source>
        <dbReference type="SAM" id="MobiDB-lite"/>
    </source>
</evidence>
<comment type="function">
    <text evidence="1">Produces ATP from ADP in the presence of a proton gradient across the membrane. The catalytic sites are hosted primarily by the beta subunits.</text>
</comment>
<comment type="catalytic activity">
    <reaction evidence="1">
        <text>ATP + H2O + 4 H(+)(in) = ADP + phosphate + 5 H(+)(out)</text>
        <dbReference type="Rhea" id="RHEA:57720"/>
        <dbReference type="ChEBI" id="CHEBI:15377"/>
        <dbReference type="ChEBI" id="CHEBI:15378"/>
        <dbReference type="ChEBI" id="CHEBI:30616"/>
        <dbReference type="ChEBI" id="CHEBI:43474"/>
        <dbReference type="ChEBI" id="CHEBI:456216"/>
        <dbReference type="EC" id="7.1.2.2"/>
    </reaction>
</comment>
<comment type="subunit">
    <text evidence="1">F-type ATPases have 2 components, CF(1) - the catalytic core - and CF(0) - the membrane proton channel. CF(1) has five subunits: alpha(3), beta(3), gamma(1), delta(1), epsilon(1). CF(0) has three main subunits: a(1), b(2) and c(9-12). The alpha and beta chains form an alternating ring which encloses part of the gamma chain. CF(1) is attached to CF(0) by a central stalk formed by the gamma and epsilon chains, while a peripheral stalk is formed by the delta and b chains.</text>
</comment>
<comment type="subcellular location">
    <subcellularLocation>
        <location evidence="1">Cell membrane</location>
        <topology evidence="1">Peripheral membrane protein</topology>
    </subcellularLocation>
</comment>
<comment type="similarity">
    <text evidence="1">Belongs to the ATPase alpha/beta chains family.</text>
</comment>
<dbReference type="EC" id="7.1.2.2" evidence="1"/>
<dbReference type="EMBL" id="CP000479">
    <property type="protein sequence ID" value="ABK66662.1"/>
    <property type="molecule type" value="Genomic_DNA"/>
</dbReference>
<dbReference type="RefSeq" id="WP_011724205.1">
    <property type="nucleotide sequence ID" value="NC_008595.1"/>
</dbReference>
<dbReference type="SMR" id="A0QCX8"/>
<dbReference type="KEGG" id="mav:MAV_1527"/>
<dbReference type="HOGENOM" id="CLU_022398_0_2_11"/>
<dbReference type="Proteomes" id="UP000001574">
    <property type="component" value="Chromosome"/>
</dbReference>
<dbReference type="GO" id="GO:0005886">
    <property type="term" value="C:plasma membrane"/>
    <property type="evidence" value="ECO:0007669"/>
    <property type="project" value="UniProtKB-SubCell"/>
</dbReference>
<dbReference type="GO" id="GO:0045259">
    <property type="term" value="C:proton-transporting ATP synthase complex"/>
    <property type="evidence" value="ECO:0007669"/>
    <property type="project" value="UniProtKB-KW"/>
</dbReference>
<dbReference type="GO" id="GO:0005524">
    <property type="term" value="F:ATP binding"/>
    <property type="evidence" value="ECO:0007669"/>
    <property type="project" value="UniProtKB-UniRule"/>
</dbReference>
<dbReference type="GO" id="GO:0016887">
    <property type="term" value="F:ATP hydrolysis activity"/>
    <property type="evidence" value="ECO:0007669"/>
    <property type="project" value="InterPro"/>
</dbReference>
<dbReference type="GO" id="GO:0046933">
    <property type="term" value="F:proton-transporting ATP synthase activity, rotational mechanism"/>
    <property type="evidence" value="ECO:0007669"/>
    <property type="project" value="UniProtKB-UniRule"/>
</dbReference>
<dbReference type="CDD" id="cd18110">
    <property type="entry name" value="ATP-synt_F1_beta_C"/>
    <property type="match status" value="1"/>
</dbReference>
<dbReference type="CDD" id="cd18115">
    <property type="entry name" value="ATP-synt_F1_beta_N"/>
    <property type="match status" value="1"/>
</dbReference>
<dbReference type="CDD" id="cd01133">
    <property type="entry name" value="F1-ATPase_beta_CD"/>
    <property type="match status" value="1"/>
</dbReference>
<dbReference type="FunFam" id="1.10.1140.10:FF:000001">
    <property type="entry name" value="ATP synthase subunit beta"/>
    <property type="match status" value="1"/>
</dbReference>
<dbReference type="FunFam" id="2.40.10.170:FF:000005">
    <property type="entry name" value="ATP synthase subunit beta"/>
    <property type="match status" value="1"/>
</dbReference>
<dbReference type="FunFam" id="3.40.50.300:FF:000004">
    <property type="entry name" value="ATP synthase subunit beta"/>
    <property type="match status" value="1"/>
</dbReference>
<dbReference type="Gene3D" id="2.40.10.170">
    <property type="match status" value="1"/>
</dbReference>
<dbReference type="Gene3D" id="1.10.1140.10">
    <property type="entry name" value="Bovine Mitochondrial F1-atpase, Atp Synthase Beta Chain, Chain D, domain 3"/>
    <property type="match status" value="1"/>
</dbReference>
<dbReference type="Gene3D" id="3.40.50.300">
    <property type="entry name" value="P-loop containing nucleotide triphosphate hydrolases"/>
    <property type="match status" value="1"/>
</dbReference>
<dbReference type="HAMAP" id="MF_01347">
    <property type="entry name" value="ATP_synth_beta_bact"/>
    <property type="match status" value="1"/>
</dbReference>
<dbReference type="InterPro" id="IPR003593">
    <property type="entry name" value="AAA+_ATPase"/>
</dbReference>
<dbReference type="InterPro" id="IPR055190">
    <property type="entry name" value="ATP-synt_VA_C"/>
</dbReference>
<dbReference type="InterPro" id="IPR005722">
    <property type="entry name" value="ATP_synth_F1_bsu"/>
</dbReference>
<dbReference type="InterPro" id="IPR020003">
    <property type="entry name" value="ATPase_a/bsu_AS"/>
</dbReference>
<dbReference type="InterPro" id="IPR050053">
    <property type="entry name" value="ATPase_alpha/beta_chains"/>
</dbReference>
<dbReference type="InterPro" id="IPR004100">
    <property type="entry name" value="ATPase_F1/V1/A1_a/bsu_N"/>
</dbReference>
<dbReference type="InterPro" id="IPR036121">
    <property type="entry name" value="ATPase_F1/V1/A1_a/bsu_N_sf"/>
</dbReference>
<dbReference type="InterPro" id="IPR000194">
    <property type="entry name" value="ATPase_F1/V1/A1_a/bsu_nucl-bd"/>
</dbReference>
<dbReference type="InterPro" id="IPR024034">
    <property type="entry name" value="ATPase_F1/V1_b/a_C"/>
</dbReference>
<dbReference type="InterPro" id="IPR027417">
    <property type="entry name" value="P-loop_NTPase"/>
</dbReference>
<dbReference type="NCBIfam" id="TIGR01039">
    <property type="entry name" value="atpD"/>
    <property type="match status" value="1"/>
</dbReference>
<dbReference type="PANTHER" id="PTHR15184">
    <property type="entry name" value="ATP SYNTHASE"/>
    <property type="match status" value="1"/>
</dbReference>
<dbReference type="PANTHER" id="PTHR15184:SF71">
    <property type="entry name" value="ATP SYNTHASE SUBUNIT BETA, MITOCHONDRIAL"/>
    <property type="match status" value="1"/>
</dbReference>
<dbReference type="Pfam" id="PF00006">
    <property type="entry name" value="ATP-synt_ab"/>
    <property type="match status" value="1"/>
</dbReference>
<dbReference type="Pfam" id="PF02874">
    <property type="entry name" value="ATP-synt_ab_N"/>
    <property type="match status" value="1"/>
</dbReference>
<dbReference type="Pfam" id="PF22919">
    <property type="entry name" value="ATP-synt_VA_C"/>
    <property type="match status" value="1"/>
</dbReference>
<dbReference type="SMART" id="SM00382">
    <property type="entry name" value="AAA"/>
    <property type="match status" value="1"/>
</dbReference>
<dbReference type="SUPFAM" id="SSF47917">
    <property type="entry name" value="C-terminal domain of alpha and beta subunits of F1 ATP synthase"/>
    <property type="match status" value="1"/>
</dbReference>
<dbReference type="SUPFAM" id="SSF50615">
    <property type="entry name" value="N-terminal domain of alpha and beta subunits of F1 ATP synthase"/>
    <property type="match status" value="1"/>
</dbReference>
<dbReference type="SUPFAM" id="SSF52540">
    <property type="entry name" value="P-loop containing nucleoside triphosphate hydrolases"/>
    <property type="match status" value="1"/>
</dbReference>
<dbReference type="PROSITE" id="PS00152">
    <property type="entry name" value="ATPASE_ALPHA_BETA"/>
    <property type="match status" value="1"/>
</dbReference>
<name>ATPB_MYCA1</name>
<reference key="1">
    <citation type="submission" date="2006-10" db="EMBL/GenBank/DDBJ databases">
        <authorList>
            <person name="Fleischmann R.D."/>
            <person name="Dodson R.J."/>
            <person name="Haft D.H."/>
            <person name="Merkel J.S."/>
            <person name="Nelson W.C."/>
            <person name="Fraser C.M."/>
        </authorList>
    </citation>
    <scope>NUCLEOTIDE SEQUENCE [LARGE SCALE GENOMIC DNA]</scope>
    <source>
        <strain>104</strain>
    </source>
</reference>
<proteinExistence type="inferred from homology"/>
<organism>
    <name type="scientific">Mycobacterium avium (strain 104)</name>
    <dbReference type="NCBI Taxonomy" id="243243"/>
    <lineage>
        <taxon>Bacteria</taxon>
        <taxon>Bacillati</taxon>
        <taxon>Actinomycetota</taxon>
        <taxon>Actinomycetes</taxon>
        <taxon>Mycobacteriales</taxon>
        <taxon>Mycobacteriaceae</taxon>
        <taxon>Mycobacterium</taxon>
        <taxon>Mycobacterium avium complex (MAC)</taxon>
    </lineage>
</organism>
<gene>
    <name evidence="1" type="primary">atpD</name>
    <name type="ordered locus">MAV_1527</name>
</gene>
<feature type="chain" id="PRO_1000055134" description="ATP synthase subunit beta">
    <location>
        <begin position="1"/>
        <end position="485"/>
    </location>
</feature>
<feature type="region of interest" description="Disordered" evidence="2">
    <location>
        <begin position="1"/>
        <end position="20"/>
    </location>
</feature>
<feature type="compositionally biased region" description="Basic and acidic residues" evidence="2">
    <location>
        <begin position="1"/>
        <end position="11"/>
    </location>
</feature>
<feature type="binding site" evidence="1">
    <location>
        <begin position="170"/>
        <end position="177"/>
    </location>
    <ligand>
        <name>ATP</name>
        <dbReference type="ChEBI" id="CHEBI:30616"/>
    </ligand>
</feature>
<protein>
    <recommendedName>
        <fullName evidence="1">ATP synthase subunit beta</fullName>
        <ecNumber evidence="1">7.1.2.2</ecNumber>
    </recommendedName>
    <alternativeName>
        <fullName evidence="1">ATP synthase F1 sector subunit beta</fullName>
    </alternativeName>
    <alternativeName>
        <fullName evidence="1">F-ATPase subunit beta</fullName>
    </alternativeName>
</protein>
<keyword id="KW-0066">ATP synthesis</keyword>
<keyword id="KW-0067">ATP-binding</keyword>
<keyword id="KW-1003">Cell membrane</keyword>
<keyword id="KW-0139">CF(1)</keyword>
<keyword id="KW-0375">Hydrogen ion transport</keyword>
<keyword id="KW-0406">Ion transport</keyword>
<keyword id="KW-0472">Membrane</keyword>
<keyword id="KW-0547">Nucleotide-binding</keyword>
<keyword id="KW-1278">Translocase</keyword>
<keyword id="KW-0813">Transport</keyword>
<sequence>MPATETADKNTKSANSDTSGRVVRVTGPVVDVEFPRGSVPALFNALHAEITFEELAKTLTLEVAQHLGDNLVRTISLQPTDGLVRGVEVIDTGRSISVPVGQEVKGHVFNALGHCLDKPGYGEDFEHWSIHRKPPPFEELEPRTEMLETGLKVVDLLTPYVRGGKIALFGGAGVGKTVLIQEMINRIARNFGGTSVFAGVGERTREGNDLWVELQEANVLKDTALVFGQMDEPPGTRMRVALSALTMAEWFRDEAGQDVLLFIDNIFRFTQAGSEVSTLLGRMPSAVGYQPTLADEMGELQERITSTRGRSITSMQAVYVPADDYTDPAPATTFAHLDATTELSRSVFSKGIFPAVDPLASSSTILDPGVVGEEHYRVAQEVIRILQRYKDLQDIIAILGIDELSEEDKQLVNRARRIERFLSQNMMAAEQFTGQPGSTVPLKETIEAFDRLTKGEFDHVPEQAFFLIGGLDDLAKKAESLGAKL</sequence>